<feature type="chain" id="PRO_1000195407" description="Recombination protein RecR">
    <location>
        <begin position="1"/>
        <end position="199"/>
    </location>
</feature>
<feature type="domain" description="Toprim" evidence="1">
    <location>
        <begin position="81"/>
        <end position="176"/>
    </location>
</feature>
<feature type="zinc finger region" description="C4-type" evidence="1">
    <location>
        <begin position="57"/>
        <end position="72"/>
    </location>
</feature>
<keyword id="KW-0227">DNA damage</keyword>
<keyword id="KW-0233">DNA recombination</keyword>
<keyword id="KW-0234">DNA repair</keyword>
<keyword id="KW-0479">Metal-binding</keyword>
<keyword id="KW-0862">Zinc</keyword>
<keyword id="KW-0863">Zinc-finger</keyword>
<reference key="1">
    <citation type="submission" date="2008-12" db="EMBL/GenBank/DDBJ databases">
        <title>Complete sequence of chromosome of Shewanella baltica OS223.</title>
        <authorList>
            <consortium name="US DOE Joint Genome Institute"/>
            <person name="Lucas S."/>
            <person name="Copeland A."/>
            <person name="Lapidus A."/>
            <person name="Glavina del Rio T."/>
            <person name="Dalin E."/>
            <person name="Tice H."/>
            <person name="Bruce D."/>
            <person name="Goodwin L."/>
            <person name="Pitluck S."/>
            <person name="Chertkov O."/>
            <person name="Meincke L."/>
            <person name="Brettin T."/>
            <person name="Detter J.C."/>
            <person name="Han C."/>
            <person name="Kuske C.R."/>
            <person name="Larimer F."/>
            <person name="Land M."/>
            <person name="Hauser L."/>
            <person name="Kyrpides N."/>
            <person name="Ovchinnikova G."/>
            <person name="Brettar I."/>
            <person name="Rodrigues J."/>
            <person name="Konstantinidis K."/>
            <person name="Tiedje J."/>
        </authorList>
    </citation>
    <scope>NUCLEOTIDE SEQUENCE [LARGE SCALE GENOMIC DNA]</scope>
    <source>
        <strain>OS223</strain>
    </source>
</reference>
<proteinExistence type="inferred from homology"/>
<organism>
    <name type="scientific">Shewanella baltica (strain OS223)</name>
    <dbReference type="NCBI Taxonomy" id="407976"/>
    <lineage>
        <taxon>Bacteria</taxon>
        <taxon>Pseudomonadati</taxon>
        <taxon>Pseudomonadota</taxon>
        <taxon>Gammaproteobacteria</taxon>
        <taxon>Alteromonadales</taxon>
        <taxon>Shewanellaceae</taxon>
        <taxon>Shewanella</taxon>
    </lineage>
</organism>
<dbReference type="EMBL" id="CP001252">
    <property type="protein sequence ID" value="ACK46276.1"/>
    <property type="molecule type" value="Genomic_DNA"/>
</dbReference>
<dbReference type="RefSeq" id="WP_006082081.1">
    <property type="nucleotide sequence ID" value="NC_011663.1"/>
</dbReference>
<dbReference type="SMR" id="B8E703"/>
<dbReference type="GeneID" id="11772786"/>
<dbReference type="KEGG" id="sbp:Sbal223_1771"/>
<dbReference type="HOGENOM" id="CLU_060739_1_2_6"/>
<dbReference type="Proteomes" id="UP000002507">
    <property type="component" value="Chromosome"/>
</dbReference>
<dbReference type="GO" id="GO:0003677">
    <property type="term" value="F:DNA binding"/>
    <property type="evidence" value="ECO:0007669"/>
    <property type="project" value="UniProtKB-UniRule"/>
</dbReference>
<dbReference type="GO" id="GO:0008270">
    <property type="term" value="F:zinc ion binding"/>
    <property type="evidence" value="ECO:0007669"/>
    <property type="project" value="UniProtKB-KW"/>
</dbReference>
<dbReference type="GO" id="GO:0006310">
    <property type="term" value="P:DNA recombination"/>
    <property type="evidence" value="ECO:0007669"/>
    <property type="project" value="UniProtKB-UniRule"/>
</dbReference>
<dbReference type="GO" id="GO:0006281">
    <property type="term" value="P:DNA repair"/>
    <property type="evidence" value="ECO:0007669"/>
    <property type="project" value="UniProtKB-UniRule"/>
</dbReference>
<dbReference type="CDD" id="cd01025">
    <property type="entry name" value="TOPRIM_recR"/>
    <property type="match status" value="1"/>
</dbReference>
<dbReference type="FunFam" id="1.10.8.420:FF:000001">
    <property type="entry name" value="Recombination protein RecR"/>
    <property type="match status" value="1"/>
</dbReference>
<dbReference type="FunFam" id="3.40.1360.10:FF:000001">
    <property type="entry name" value="Recombination protein RecR"/>
    <property type="match status" value="1"/>
</dbReference>
<dbReference type="Gene3D" id="3.40.1360.10">
    <property type="match status" value="1"/>
</dbReference>
<dbReference type="Gene3D" id="6.10.250.240">
    <property type="match status" value="1"/>
</dbReference>
<dbReference type="Gene3D" id="1.10.8.420">
    <property type="entry name" value="RecR Domain 1"/>
    <property type="match status" value="1"/>
</dbReference>
<dbReference type="HAMAP" id="MF_00017">
    <property type="entry name" value="RecR"/>
    <property type="match status" value="1"/>
</dbReference>
<dbReference type="InterPro" id="IPR000093">
    <property type="entry name" value="DNA_Rcmb_RecR"/>
</dbReference>
<dbReference type="InterPro" id="IPR023627">
    <property type="entry name" value="Rcmb_RecR"/>
</dbReference>
<dbReference type="InterPro" id="IPR015967">
    <property type="entry name" value="Rcmb_RecR_Znf"/>
</dbReference>
<dbReference type="InterPro" id="IPR006171">
    <property type="entry name" value="TOPRIM_dom"/>
</dbReference>
<dbReference type="InterPro" id="IPR034137">
    <property type="entry name" value="TOPRIM_RecR"/>
</dbReference>
<dbReference type="NCBIfam" id="TIGR00615">
    <property type="entry name" value="recR"/>
    <property type="match status" value="1"/>
</dbReference>
<dbReference type="PANTHER" id="PTHR30446">
    <property type="entry name" value="RECOMBINATION PROTEIN RECR"/>
    <property type="match status" value="1"/>
</dbReference>
<dbReference type="PANTHER" id="PTHR30446:SF0">
    <property type="entry name" value="RECOMBINATION PROTEIN RECR"/>
    <property type="match status" value="1"/>
</dbReference>
<dbReference type="Pfam" id="PF21175">
    <property type="entry name" value="RecR_C"/>
    <property type="match status" value="1"/>
</dbReference>
<dbReference type="Pfam" id="PF21176">
    <property type="entry name" value="RecR_HhH"/>
    <property type="match status" value="1"/>
</dbReference>
<dbReference type="Pfam" id="PF02132">
    <property type="entry name" value="RecR_ZnF"/>
    <property type="match status" value="1"/>
</dbReference>
<dbReference type="Pfam" id="PF13662">
    <property type="entry name" value="Toprim_4"/>
    <property type="match status" value="1"/>
</dbReference>
<dbReference type="SMART" id="SM00493">
    <property type="entry name" value="TOPRIM"/>
    <property type="match status" value="1"/>
</dbReference>
<dbReference type="SUPFAM" id="SSF111304">
    <property type="entry name" value="Recombination protein RecR"/>
    <property type="match status" value="1"/>
</dbReference>
<dbReference type="PROSITE" id="PS50880">
    <property type="entry name" value="TOPRIM"/>
    <property type="match status" value="1"/>
</dbReference>
<accession>B8E703</accession>
<name>RECR_SHEB2</name>
<sequence length="199" mass="21264">MKFSPLLDELIQSLRCLPGVGPKSAQRMAFQLLERDRKAGLKLASALSSAMSDVGHCQSCRTYTEETLCPICASHKRGTSSTICVVETPADVLAIEAGGHFTGRYFVLLGHLSPLDGVGPEELGLALLERHLASGDVAELILATNPTVEGEATAHFIADMARRHKVMISRIAHGVPVGGELEYVDSTTLALSFNGRLPL</sequence>
<evidence type="ECO:0000255" key="1">
    <source>
        <dbReference type="HAMAP-Rule" id="MF_00017"/>
    </source>
</evidence>
<comment type="function">
    <text evidence="1">May play a role in DNA repair. It seems to be involved in an RecBC-independent recombinational process of DNA repair. It may act with RecF and RecO.</text>
</comment>
<comment type="similarity">
    <text evidence="1">Belongs to the RecR family.</text>
</comment>
<gene>
    <name evidence="1" type="primary">recR</name>
    <name type="ordered locus">Sbal223_1771</name>
</gene>
<protein>
    <recommendedName>
        <fullName evidence="1">Recombination protein RecR</fullName>
    </recommendedName>
</protein>